<feature type="signal peptide" evidence="1">
    <location>
        <begin position="1"/>
        <end position="20"/>
    </location>
</feature>
<feature type="chain" id="PRO_0000025258" description="Outer membrane protein P2">
    <location>
        <begin position="21"/>
        <end position="359"/>
    </location>
</feature>
<evidence type="ECO:0000250" key="1"/>
<evidence type="ECO:0000305" key="2"/>
<proteinExistence type="inferred from homology"/>
<sequence>MKKTLAALIVGAFAASAANAAVVYNNEGTNVELGGRLSIIAEQSNSTVDNQKQQHGALRNQGSRFHIKATHNFGDGFYAQGYLETRFVTKASENGSDNFGDITSKYAYVTLGNKAFGEVKLGRAKTIADGITSAEDKEYGVLNNSDYIPTSGNTVGYTFKGIDGLVLGANYLLAQKREGAKNTNKQPNDKAGEVRIGEINNGIQVGAKYDANDIVAKIAYGRTNYKYNEADEHTQQLNGVLATLGYRFSDLGLLVSLDSGYAKTKNYKTKHEKRYFVSPGFQYELMEDTNVYGNFKYERTSVDQGEKTREQAVLFGVDHKLHKQLLTYIEGAYARTKTTNGGVKTEKEKSVGVGLRVYF</sequence>
<protein>
    <recommendedName>
        <fullName>Outer membrane protein P2</fullName>
        <shortName>OMP P2</shortName>
    </recommendedName>
</protein>
<gene>
    <name type="primary">ompP2</name>
    <name type="ordered locus">HI_0139</name>
</gene>
<name>OPP21_HAEIN</name>
<reference key="1">
    <citation type="journal article" date="1995" name="Science">
        <title>Whole-genome random sequencing and assembly of Haemophilus influenzae Rd.</title>
        <authorList>
            <person name="Fleischmann R.D."/>
            <person name="Adams M.D."/>
            <person name="White O."/>
            <person name="Clayton R.A."/>
            <person name="Kirkness E.F."/>
            <person name="Kerlavage A.R."/>
            <person name="Bult C.J."/>
            <person name="Tomb J.-F."/>
            <person name="Dougherty B.A."/>
            <person name="Merrick J.M."/>
            <person name="McKenney K."/>
            <person name="Sutton G.G."/>
            <person name="FitzHugh W."/>
            <person name="Fields C.A."/>
            <person name="Gocayne J.D."/>
            <person name="Scott J.D."/>
            <person name="Shirley R."/>
            <person name="Liu L.-I."/>
            <person name="Glodek A."/>
            <person name="Kelley J.M."/>
            <person name="Weidman J.F."/>
            <person name="Phillips C.A."/>
            <person name="Spriggs T."/>
            <person name="Hedblom E."/>
            <person name="Cotton M.D."/>
            <person name="Utterback T.R."/>
            <person name="Hanna M.C."/>
            <person name="Nguyen D.T."/>
            <person name="Saudek D.M."/>
            <person name="Brandon R.C."/>
            <person name="Fine L.D."/>
            <person name="Fritchman J.L."/>
            <person name="Fuhrmann J.L."/>
            <person name="Geoghagen N.S.M."/>
            <person name="Gnehm C.L."/>
            <person name="McDonald L.A."/>
            <person name="Small K.V."/>
            <person name="Fraser C.M."/>
            <person name="Smith H.O."/>
            <person name="Venter J.C."/>
        </authorList>
    </citation>
    <scope>NUCLEOTIDE SEQUENCE [LARGE SCALE GENOMIC DNA]</scope>
    <source>
        <strain>ATCC 51907 / DSM 11121 / KW20 / Rd</strain>
    </source>
</reference>
<comment type="function">
    <text evidence="1">Forms pores that allow passive diffusion of small molecules across the outer membrane.</text>
</comment>
<comment type="subunit">
    <text evidence="1">Homotrimer.</text>
</comment>
<comment type="subcellular location">
    <subcellularLocation>
        <location>Cell outer membrane</location>
        <topology>Multi-pass membrane protein</topology>
    </subcellularLocation>
</comment>
<comment type="similarity">
    <text evidence="2">Belongs to the Gram-negative porin family.</text>
</comment>
<organism>
    <name type="scientific">Haemophilus influenzae (strain ATCC 51907 / DSM 11121 / KW20 / Rd)</name>
    <dbReference type="NCBI Taxonomy" id="71421"/>
    <lineage>
        <taxon>Bacteria</taxon>
        <taxon>Pseudomonadati</taxon>
        <taxon>Pseudomonadota</taxon>
        <taxon>Gammaproteobacteria</taxon>
        <taxon>Pasteurellales</taxon>
        <taxon>Pasteurellaceae</taxon>
        <taxon>Haemophilus</taxon>
    </lineage>
</organism>
<keyword id="KW-0998">Cell outer membrane</keyword>
<keyword id="KW-0406">Ion transport</keyword>
<keyword id="KW-0472">Membrane</keyword>
<keyword id="KW-0626">Porin</keyword>
<keyword id="KW-1185">Reference proteome</keyword>
<keyword id="KW-0732">Signal</keyword>
<keyword id="KW-0812">Transmembrane</keyword>
<keyword id="KW-1134">Transmembrane beta strand</keyword>
<keyword id="KW-0813">Transport</keyword>
<dbReference type="EMBL" id="L42023">
    <property type="protein sequence ID" value="AAC21810.1"/>
    <property type="molecule type" value="Genomic_DNA"/>
</dbReference>
<dbReference type="PIR" id="D64050">
    <property type="entry name" value="D64050"/>
</dbReference>
<dbReference type="RefSeq" id="NP_438308.1">
    <property type="nucleotide sequence ID" value="NC_000907.1"/>
</dbReference>
<dbReference type="SMR" id="P43839"/>
<dbReference type="STRING" id="71421.HI_0139"/>
<dbReference type="EnsemblBacteria" id="AAC21810">
    <property type="protein sequence ID" value="AAC21810"/>
    <property type="gene ID" value="HI_0139"/>
</dbReference>
<dbReference type="KEGG" id="hin:HI_0139"/>
<dbReference type="PATRIC" id="fig|71421.8.peg.141"/>
<dbReference type="eggNOG" id="COG3203">
    <property type="taxonomic scope" value="Bacteria"/>
</dbReference>
<dbReference type="HOGENOM" id="CLU_058202_1_1_6"/>
<dbReference type="OrthoDB" id="5689851at2"/>
<dbReference type="BioCyc" id="HINF71421:G1GJ1-151-MONOMER"/>
<dbReference type="Proteomes" id="UP000000579">
    <property type="component" value="Chromosome"/>
</dbReference>
<dbReference type="GO" id="GO:0009279">
    <property type="term" value="C:cell outer membrane"/>
    <property type="evidence" value="ECO:0007669"/>
    <property type="project" value="UniProtKB-SubCell"/>
</dbReference>
<dbReference type="GO" id="GO:0046930">
    <property type="term" value="C:pore complex"/>
    <property type="evidence" value="ECO:0000318"/>
    <property type="project" value="GO_Central"/>
</dbReference>
<dbReference type="GO" id="GO:0015288">
    <property type="term" value="F:porin activity"/>
    <property type="evidence" value="ECO:0000318"/>
    <property type="project" value="GO_Central"/>
</dbReference>
<dbReference type="GO" id="GO:0006811">
    <property type="term" value="P:monoatomic ion transport"/>
    <property type="evidence" value="ECO:0007669"/>
    <property type="project" value="UniProtKB-KW"/>
</dbReference>
<dbReference type="CDD" id="cd00342">
    <property type="entry name" value="gram_neg_porins"/>
    <property type="match status" value="1"/>
</dbReference>
<dbReference type="Gene3D" id="2.40.160.10">
    <property type="entry name" value="Porin"/>
    <property type="match status" value="1"/>
</dbReference>
<dbReference type="InterPro" id="IPR050298">
    <property type="entry name" value="Gram-neg_bact_OMP"/>
</dbReference>
<dbReference type="InterPro" id="IPR033900">
    <property type="entry name" value="Gram_neg_porin_domain"/>
</dbReference>
<dbReference type="InterPro" id="IPR023614">
    <property type="entry name" value="Porin_dom_sf"/>
</dbReference>
<dbReference type="PANTHER" id="PTHR34501:SF2">
    <property type="entry name" value="OUTER MEMBRANE PORIN F-RELATED"/>
    <property type="match status" value="1"/>
</dbReference>
<dbReference type="PANTHER" id="PTHR34501">
    <property type="entry name" value="PROTEIN YDDL-RELATED"/>
    <property type="match status" value="1"/>
</dbReference>
<dbReference type="Pfam" id="PF13609">
    <property type="entry name" value="Porin_4"/>
    <property type="match status" value="1"/>
</dbReference>
<dbReference type="SUPFAM" id="SSF56935">
    <property type="entry name" value="Porins"/>
    <property type="match status" value="1"/>
</dbReference>
<accession>P43839</accession>